<gene>
    <name evidence="1" type="primary">mdtB</name>
    <name type="ordered locus">CKO_00706</name>
</gene>
<proteinExistence type="inferred from homology"/>
<protein>
    <recommendedName>
        <fullName evidence="1">Multidrug resistance protein MdtB</fullName>
    </recommendedName>
    <alternativeName>
        <fullName evidence="1">Multidrug transporter MdtB</fullName>
    </alternativeName>
</protein>
<evidence type="ECO:0000255" key="1">
    <source>
        <dbReference type="HAMAP-Rule" id="MF_01423"/>
    </source>
</evidence>
<dbReference type="EMBL" id="CP000822">
    <property type="protein sequence ID" value="ABV11859.1"/>
    <property type="molecule type" value="Genomic_DNA"/>
</dbReference>
<dbReference type="RefSeq" id="WP_012131683.1">
    <property type="nucleotide sequence ID" value="NC_009792.1"/>
</dbReference>
<dbReference type="SMR" id="A8AEE6"/>
<dbReference type="STRING" id="290338.CKO_00706"/>
<dbReference type="GeneID" id="45134922"/>
<dbReference type="KEGG" id="cko:CKO_00706"/>
<dbReference type="HOGENOM" id="CLU_002755_1_2_6"/>
<dbReference type="OrthoDB" id="9757904at2"/>
<dbReference type="Proteomes" id="UP000008148">
    <property type="component" value="Chromosome"/>
</dbReference>
<dbReference type="GO" id="GO:0005886">
    <property type="term" value="C:plasma membrane"/>
    <property type="evidence" value="ECO:0007669"/>
    <property type="project" value="UniProtKB-SubCell"/>
</dbReference>
<dbReference type="GO" id="GO:0042910">
    <property type="term" value="F:xenobiotic transmembrane transporter activity"/>
    <property type="evidence" value="ECO:0007669"/>
    <property type="project" value="TreeGrafter"/>
</dbReference>
<dbReference type="FunFam" id="1.20.1640.10:FF:000001">
    <property type="entry name" value="Efflux pump membrane transporter"/>
    <property type="match status" value="1"/>
</dbReference>
<dbReference type="FunFam" id="3.30.70.1430:FF:000001">
    <property type="entry name" value="Efflux pump membrane transporter"/>
    <property type="match status" value="1"/>
</dbReference>
<dbReference type="Gene3D" id="3.30.70.1430">
    <property type="entry name" value="Multidrug efflux transporter AcrB pore domain"/>
    <property type="match status" value="2"/>
</dbReference>
<dbReference type="Gene3D" id="3.30.70.1440">
    <property type="entry name" value="Multidrug efflux transporter AcrB pore domain"/>
    <property type="match status" value="1"/>
</dbReference>
<dbReference type="Gene3D" id="3.30.70.1320">
    <property type="entry name" value="Multidrug efflux transporter AcrB pore domain like"/>
    <property type="match status" value="1"/>
</dbReference>
<dbReference type="Gene3D" id="3.30.2090.10">
    <property type="entry name" value="Multidrug efflux transporter AcrB TolC docking domain, DN and DC subdomains"/>
    <property type="match status" value="2"/>
</dbReference>
<dbReference type="Gene3D" id="1.20.1640.10">
    <property type="entry name" value="Multidrug efflux transporter AcrB transmembrane domain"/>
    <property type="match status" value="2"/>
</dbReference>
<dbReference type="HAMAP" id="MF_01423">
    <property type="entry name" value="MdtB"/>
    <property type="match status" value="1"/>
</dbReference>
<dbReference type="InterPro" id="IPR027463">
    <property type="entry name" value="AcrB_DN_DC_subdom"/>
</dbReference>
<dbReference type="InterPro" id="IPR001036">
    <property type="entry name" value="Acrflvin-R"/>
</dbReference>
<dbReference type="InterPro" id="IPR022831">
    <property type="entry name" value="Multidrug-R_MdtB"/>
</dbReference>
<dbReference type="NCBIfam" id="NF007798">
    <property type="entry name" value="PRK10503.1"/>
    <property type="match status" value="1"/>
</dbReference>
<dbReference type="NCBIfam" id="NF033617">
    <property type="entry name" value="RND_permease_2"/>
    <property type="match status" value="1"/>
</dbReference>
<dbReference type="PANTHER" id="PTHR32063">
    <property type="match status" value="1"/>
</dbReference>
<dbReference type="PANTHER" id="PTHR32063:SF21">
    <property type="entry name" value="MULTIDRUG RESISTANCE PROTEIN MDTB"/>
    <property type="match status" value="1"/>
</dbReference>
<dbReference type="Pfam" id="PF00873">
    <property type="entry name" value="ACR_tran"/>
    <property type="match status" value="1"/>
</dbReference>
<dbReference type="PRINTS" id="PR00702">
    <property type="entry name" value="ACRIFLAVINRP"/>
</dbReference>
<dbReference type="SUPFAM" id="SSF82693">
    <property type="entry name" value="Multidrug efflux transporter AcrB pore domain, PN1, PN2, PC1 and PC2 subdomains"/>
    <property type="match status" value="3"/>
</dbReference>
<dbReference type="SUPFAM" id="SSF82714">
    <property type="entry name" value="Multidrug efflux transporter AcrB TolC docking domain, DN and DC subdomains"/>
    <property type="match status" value="2"/>
</dbReference>
<dbReference type="SUPFAM" id="SSF82866">
    <property type="entry name" value="Multidrug efflux transporter AcrB transmembrane domain"/>
    <property type="match status" value="2"/>
</dbReference>
<comment type="subunit">
    <text evidence="1">Part of a tripartite efflux system composed of MdtA, MdtB and MdtC. MdtB forms a heteromultimer with MdtC.</text>
</comment>
<comment type="subcellular location">
    <subcellularLocation>
        <location evidence="1">Cell inner membrane</location>
        <topology evidence="1">Multi-pass membrane protein</topology>
    </subcellularLocation>
</comment>
<comment type="similarity">
    <text evidence="1">Belongs to the resistance-nodulation-cell division (RND) (TC 2.A.6) family. MdtB subfamily.</text>
</comment>
<name>MDTB_CITK8</name>
<accession>A8AEE6</accession>
<sequence>MQVLPPSSTGGPSRLFIMRPVATTLLMVAILLAGIIGYRFLPVAALPEVDYPTIQVVTLYPGASPDVMTSAVTAPLERQFGQMSGLKQMSSQSSGGASVVTLQFQLTLPLDVAEQEVQAAINAATNLLPSDLPNPPVYSKVNPADPPIMTLAVTSTAMPMTQVEDMVETRVAQKISQVSGVGLVTLSGGQRPAVRVKLNAQAIAALGLTSETVRAAITSANVNSAKGSLDGPTRAVTLSANDQMQSVDEYRQLIIAWQNGAPVRLGDVATVEQGAENSWLGAWANKEQAIVMNVQRQPGANIISTADSIRQMLPQLTESLPKSVNVTVLSDRTTNIRASVTDTQFELMLAIALVVMIIYLFLRNVPATIIPGVAVPLSLIGTFAVMVFLDFSINNLTLMALTIATGFVVDDAIVVIENISRYIEKGEKPLAAALKGAGEIGFTIISLTFSLIAVLIPLLFMGDIVGRLFREFAVTLAVAILISAVVSLTLTPMMCARMLSQASLRKQNRFSRAAEKMFDRVIEKYGQWLAKVLNHPWLTLSVALGTLLLSIMLWVFIPKGFFPVQDNGIIQGTLQAPQSSSFASMAQRQRQVSDVILKDPAVESLTAFVGVDGTNPALNSARLQINLKPLNERDDRVQKVIARLQHAVAKVPGVDLYLQPTQDLTIDTQVSRTQYQFTLQATSLDALSTWVPQLMEKLQQLPQLSDVSSDWQDKGLVAYVNVDRDSASRLGISMADVDNALYNAFGQRLISTIYTQANQYRVVLEHNTDTTPGLAAMDTIRLTSSDGGIVPLSAIAKIEQRFAPLSINHLDQFPVTTFSFNVPDNYSLGDAVQAILDTEKTVNLPVDITTQFQGSTLAFQAALGSTVWLIVAAVVAMYIVLGVLYESFIHPITILSTLPTAGVGALLALMIAGSELDVIAIIGIILLIGIVKKNAIMMIDFALAAEREQGMAPRDAIFQACLLRFRPILMTTLAALLGALPLMLSTGTGAELRRPLGIGMVGGLLVSQVLTLFTTPVIYLLFDRLSLYVKSRFPRQEEEA</sequence>
<reference key="1">
    <citation type="submission" date="2007-08" db="EMBL/GenBank/DDBJ databases">
        <authorList>
            <consortium name="The Citrobacter koseri Genome Sequencing Project"/>
            <person name="McClelland M."/>
            <person name="Sanderson E.K."/>
            <person name="Porwollik S."/>
            <person name="Spieth J."/>
            <person name="Clifton W.S."/>
            <person name="Latreille P."/>
            <person name="Courtney L."/>
            <person name="Wang C."/>
            <person name="Pepin K."/>
            <person name="Bhonagiri V."/>
            <person name="Nash W."/>
            <person name="Johnson M."/>
            <person name="Thiruvilangam P."/>
            <person name="Wilson R."/>
        </authorList>
    </citation>
    <scope>NUCLEOTIDE SEQUENCE [LARGE SCALE GENOMIC DNA]</scope>
    <source>
        <strain>ATCC BAA-895 / CDC 4225-83 / SGSC4696</strain>
    </source>
</reference>
<feature type="chain" id="PRO_1000024299" description="Multidrug resistance protein MdtB">
    <location>
        <begin position="1"/>
        <end position="1040"/>
    </location>
</feature>
<feature type="transmembrane region" description="Helical" evidence="1">
    <location>
        <begin position="25"/>
        <end position="45"/>
    </location>
</feature>
<feature type="transmembrane region" description="Helical" evidence="1">
    <location>
        <begin position="342"/>
        <end position="362"/>
    </location>
</feature>
<feature type="transmembrane region" description="Helical" evidence="1">
    <location>
        <begin position="369"/>
        <end position="389"/>
    </location>
</feature>
<feature type="transmembrane region" description="Helical" evidence="1">
    <location>
        <begin position="396"/>
        <end position="416"/>
    </location>
</feature>
<feature type="transmembrane region" description="Helical" evidence="1">
    <location>
        <begin position="440"/>
        <end position="460"/>
    </location>
</feature>
<feature type="transmembrane region" description="Helical" evidence="1">
    <location>
        <begin position="472"/>
        <end position="492"/>
    </location>
</feature>
<feature type="transmembrane region" description="Helical" evidence="1">
    <location>
        <begin position="537"/>
        <end position="557"/>
    </location>
</feature>
<feature type="transmembrane region" description="Helical" evidence="1">
    <location>
        <begin position="863"/>
        <end position="883"/>
    </location>
</feature>
<feature type="transmembrane region" description="Helical" evidence="1">
    <location>
        <begin position="888"/>
        <end position="908"/>
    </location>
</feature>
<feature type="transmembrane region" description="Helical" evidence="1">
    <location>
        <begin position="911"/>
        <end position="931"/>
    </location>
</feature>
<feature type="transmembrane region" description="Helical" evidence="1">
    <location>
        <begin position="967"/>
        <end position="987"/>
    </location>
</feature>
<feature type="transmembrane region" description="Helical" evidence="1">
    <location>
        <begin position="998"/>
        <end position="1018"/>
    </location>
</feature>
<organism>
    <name type="scientific">Citrobacter koseri (strain ATCC BAA-895 / CDC 4225-83 / SGSC4696)</name>
    <dbReference type="NCBI Taxonomy" id="290338"/>
    <lineage>
        <taxon>Bacteria</taxon>
        <taxon>Pseudomonadati</taxon>
        <taxon>Pseudomonadota</taxon>
        <taxon>Gammaproteobacteria</taxon>
        <taxon>Enterobacterales</taxon>
        <taxon>Enterobacteriaceae</taxon>
        <taxon>Citrobacter</taxon>
    </lineage>
</organism>
<keyword id="KW-0997">Cell inner membrane</keyword>
<keyword id="KW-1003">Cell membrane</keyword>
<keyword id="KW-0472">Membrane</keyword>
<keyword id="KW-1185">Reference proteome</keyword>
<keyword id="KW-0812">Transmembrane</keyword>
<keyword id="KW-1133">Transmembrane helix</keyword>
<keyword id="KW-0813">Transport</keyword>